<evidence type="ECO:0000255" key="1"/>
<evidence type="ECO:0000305" key="2"/>
<feature type="chain" id="PRO_0000303990" description="Putative uncharacterized protein C338.03c">
    <location>
        <begin position="1"/>
        <end position="141"/>
    </location>
</feature>
<feature type="transmembrane region" description="Helical" evidence="1">
    <location>
        <begin position="114"/>
        <end position="134"/>
    </location>
</feature>
<dbReference type="EMBL" id="CU329672">
    <property type="protein sequence ID" value="CAO77689.1"/>
    <property type="molecule type" value="Genomic_DNA"/>
</dbReference>
<dbReference type="RefSeq" id="XP_001713166.1">
    <property type="nucleotide sequence ID" value="XM_001713114.2"/>
</dbReference>
<dbReference type="PaxDb" id="4896-SPCC338.03c.1"/>
<dbReference type="EnsemblFungi" id="SPCC338.03c.1">
    <property type="protein sequence ID" value="SPCC338.03c.1:pep"/>
    <property type="gene ID" value="SPCC338.03c"/>
</dbReference>
<dbReference type="PomBase" id="SPCC338.03c"/>
<dbReference type="VEuPathDB" id="FungiDB:SPCC338.03c"/>
<dbReference type="HOGENOM" id="CLU_1826423_0_0_1"/>
<dbReference type="InParanoid" id="A6X993"/>
<dbReference type="PRO" id="PR:A6X993"/>
<dbReference type="Proteomes" id="UP000002485">
    <property type="component" value="Chromosome III"/>
</dbReference>
<dbReference type="GO" id="GO:0016020">
    <property type="term" value="C:membrane"/>
    <property type="evidence" value="ECO:0007669"/>
    <property type="project" value="UniProtKB-SubCell"/>
</dbReference>
<organism>
    <name type="scientific">Schizosaccharomyces pombe (strain 972 / ATCC 24843)</name>
    <name type="common">Fission yeast</name>
    <dbReference type="NCBI Taxonomy" id="284812"/>
    <lineage>
        <taxon>Eukaryota</taxon>
        <taxon>Fungi</taxon>
        <taxon>Dikarya</taxon>
        <taxon>Ascomycota</taxon>
        <taxon>Taphrinomycotina</taxon>
        <taxon>Schizosaccharomycetes</taxon>
        <taxon>Schizosaccharomycetales</taxon>
        <taxon>Schizosaccharomycetaceae</taxon>
        <taxon>Schizosaccharomyces</taxon>
    </lineage>
</organism>
<reference key="1">
    <citation type="journal article" date="2002" name="Nature">
        <title>The genome sequence of Schizosaccharomyces pombe.</title>
        <authorList>
            <person name="Wood V."/>
            <person name="Gwilliam R."/>
            <person name="Rajandream M.A."/>
            <person name="Lyne M.H."/>
            <person name="Lyne R."/>
            <person name="Stewart A."/>
            <person name="Sgouros J.G."/>
            <person name="Peat N."/>
            <person name="Hayles J."/>
            <person name="Baker S.G."/>
            <person name="Basham D."/>
            <person name="Bowman S."/>
            <person name="Brooks K."/>
            <person name="Brown D."/>
            <person name="Brown S."/>
            <person name="Chillingworth T."/>
            <person name="Churcher C.M."/>
            <person name="Collins M."/>
            <person name="Connor R."/>
            <person name="Cronin A."/>
            <person name="Davis P."/>
            <person name="Feltwell T."/>
            <person name="Fraser A."/>
            <person name="Gentles S."/>
            <person name="Goble A."/>
            <person name="Hamlin N."/>
            <person name="Harris D.E."/>
            <person name="Hidalgo J."/>
            <person name="Hodgson G."/>
            <person name="Holroyd S."/>
            <person name="Hornsby T."/>
            <person name="Howarth S."/>
            <person name="Huckle E.J."/>
            <person name="Hunt S."/>
            <person name="Jagels K."/>
            <person name="James K.D."/>
            <person name="Jones L."/>
            <person name="Jones M."/>
            <person name="Leather S."/>
            <person name="McDonald S."/>
            <person name="McLean J."/>
            <person name="Mooney P."/>
            <person name="Moule S."/>
            <person name="Mungall K.L."/>
            <person name="Murphy L.D."/>
            <person name="Niblett D."/>
            <person name="Odell C."/>
            <person name="Oliver K."/>
            <person name="O'Neil S."/>
            <person name="Pearson D."/>
            <person name="Quail M.A."/>
            <person name="Rabbinowitsch E."/>
            <person name="Rutherford K.M."/>
            <person name="Rutter S."/>
            <person name="Saunders D."/>
            <person name="Seeger K."/>
            <person name="Sharp S."/>
            <person name="Skelton J."/>
            <person name="Simmonds M.N."/>
            <person name="Squares R."/>
            <person name="Squares S."/>
            <person name="Stevens K."/>
            <person name="Taylor K."/>
            <person name="Taylor R.G."/>
            <person name="Tivey A."/>
            <person name="Walsh S.V."/>
            <person name="Warren T."/>
            <person name="Whitehead S."/>
            <person name="Woodward J.R."/>
            <person name="Volckaert G."/>
            <person name="Aert R."/>
            <person name="Robben J."/>
            <person name="Grymonprez B."/>
            <person name="Weltjens I."/>
            <person name="Vanstreels E."/>
            <person name="Rieger M."/>
            <person name="Schaefer M."/>
            <person name="Mueller-Auer S."/>
            <person name="Gabel C."/>
            <person name="Fuchs M."/>
            <person name="Duesterhoeft A."/>
            <person name="Fritzc C."/>
            <person name="Holzer E."/>
            <person name="Moestl D."/>
            <person name="Hilbert H."/>
            <person name="Borzym K."/>
            <person name="Langer I."/>
            <person name="Beck A."/>
            <person name="Lehrach H."/>
            <person name="Reinhardt R."/>
            <person name="Pohl T.M."/>
            <person name="Eger P."/>
            <person name="Zimmermann W."/>
            <person name="Wedler H."/>
            <person name="Wambutt R."/>
            <person name="Purnelle B."/>
            <person name="Goffeau A."/>
            <person name="Cadieu E."/>
            <person name="Dreano S."/>
            <person name="Gloux S."/>
            <person name="Lelaure V."/>
            <person name="Mottier S."/>
            <person name="Galibert F."/>
            <person name="Aves S.J."/>
            <person name="Xiang Z."/>
            <person name="Hunt C."/>
            <person name="Moore K."/>
            <person name="Hurst S.M."/>
            <person name="Lucas M."/>
            <person name="Rochet M."/>
            <person name="Gaillardin C."/>
            <person name="Tallada V.A."/>
            <person name="Garzon A."/>
            <person name="Thode G."/>
            <person name="Daga R.R."/>
            <person name="Cruzado L."/>
            <person name="Jimenez J."/>
            <person name="Sanchez M."/>
            <person name="del Rey F."/>
            <person name="Benito J."/>
            <person name="Dominguez A."/>
            <person name="Revuelta J.L."/>
            <person name="Moreno S."/>
            <person name="Armstrong J."/>
            <person name="Forsburg S.L."/>
            <person name="Cerutti L."/>
            <person name="Lowe T."/>
            <person name="McCombie W.R."/>
            <person name="Paulsen I."/>
            <person name="Potashkin J."/>
            <person name="Shpakovski G.V."/>
            <person name="Ussery D."/>
            <person name="Barrell B.G."/>
            <person name="Nurse P."/>
        </authorList>
    </citation>
    <scope>NUCLEOTIDE SEQUENCE [LARGE SCALE GENOMIC DNA]</scope>
    <source>
        <strain>972 / ATCC 24843</strain>
    </source>
</reference>
<proteinExistence type="predicted"/>
<comment type="subcellular location">
    <subcellularLocation>
        <location evidence="2">Membrane</location>
        <topology evidence="2">Single-pass membrane protein</topology>
    </subcellularLocation>
</comment>
<gene>
    <name type="ORF">SPCC338.03c</name>
</gene>
<keyword id="KW-0472">Membrane</keyword>
<keyword id="KW-1185">Reference proteome</keyword>
<keyword id="KW-0812">Transmembrane</keyword>
<keyword id="KW-1133">Transmembrane helix</keyword>
<sequence length="141" mass="16208">MVISSVFSAFADIPSVYLISVNCGARELWLTITSIHFVSLREQRYEFLANSLGERTSSLKSQEEMVSVSRNGKQLLSEASFFRLGKHVHLNFLPFENTFEMALRNDFQIFCTSILFTCYIQSFSLLISNFFIAIEVSRSFF</sequence>
<protein>
    <recommendedName>
        <fullName>Putative uncharacterized protein C338.03c</fullName>
    </recommendedName>
</protein>
<name>YJZ3_SCHPO</name>
<accession>A6X993</accession>